<sequence length="254" mass="27408">MGRVIRNQRKGAGSIFTSHTRLRQGAAKLRTLDYAERHGYIRGIVKQIVHDSGRGAPLAKVVFRDPYKYRLREEIFIANEGVHTGQFIYAGKKASLNVGNVLPLGSVPEGTIVSNVEEKPGDRGALARASGNYVIIIGHNPDENKTRVRLPSGAKKVISSDARGVIGVIAGGGRVDKPLLKAGRAFHKYRLKRNSWPKTRGVAMNPVDHPHGGGNHQHIGKASTISRGAVSGQKAGLIAARRTGLLRGSQKTQD</sequence>
<accession>P0CX45</accession>
<accession>D6VTR2</accession>
<accession>P05736</accession>
<dbReference type="EMBL" id="U17359">
    <property type="protein sequence ID" value="AAA92283.1"/>
    <property type="molecule type" value="Genomic_DNA"/>
</dbReference>
<dbReference type="EMBL" id="D50617">
    <property type="status" value="NOT_ANNOTATED_CDS"/>
    <property type="molecule type" value="Genomic_DNA"/>
</dbReference>
<dbReference type="EMBL" id="U05820">
    <property type="protein sequence ID" value="AAA17418.1"/>
    <property type="molecule type" value="Genomic_DNA"/>
</dbReference>
<dbReference type="EMBL" id="BK006940">
    <property type="protein sequence ID" value="DAA12472.1"/>
    <property type="molecule type" value="Genomic_DNA"/>
</dbReference>
<dbReference type="PIR" id="S50243">
    <property type="entry name" value="S50243"/>
</dbReference>
<dbReference type="RefSeq" id="NP_116688.3">
    <property type="nucleotide sequence ID" value="NM_001180030.3"/>
</dbReference>
<dbReference type="PDB" id="3J6X">
    <property type="method" value="EM"/>
    <property type="resolution" value="6.10 A"/>
    <property type="chains" value="L2=1-254"/>
</dbReference>
<dbReference type="PDB" id="3J6Y">
    <property type="method" value="EM"/>
    <property type="resolution" value="6.10 A"/>
    <property type="chains" value="L2=1-254"/>
</dbReference>
<dbReference type="PDB" id="3J77">
    <property type="method" value="EM"/>
    <property type="resolution" value="6.20 A"/>
    <property type="chains" value="L2=1-254"/>
</dbReference>
<dbReference type="PDB" id="3J78">
    <property type="method" value="EM"/>
    <property type="resolution" value="6.30 A"/>
    <property type="chains" value="L2=1-254"/>
</dbReference>
<dbReference type="PDB" id="3JCT">
    <property type="method" value="EM"/>
    <property type="resolution" value="3.08 A"/>
    <property type="chains" value="A=1-254"/>
</dbReference>
<dbReference type="PDB" id="4U3M">
    <property type="method" value="X-ray"/>
    <property type="resolution" value="3.00 A"/>
    <property type="chains" value="L2/l2=2-254"/>
</dbReference>
<dbReference type="PDB" id="4U3N">
    <property type="method" value="X-ray"/>
    <property type="resolution" value="3.20 A"/>
    <property type="chains" value="L2/l2=2-254"/>
</dbReference>
<dbReference type="PDB" id="4U3U">
    <property type="method" value="X-ray"/>
    <property type="resolution" value="2.90 A"/>
    <property type="chains" value="L2/l2=2-254"/>
</dbReference>
<dbReference type="PDB" id="4U4N">
    <property type="method" value="X-ray"/>
    <property type="resolution" value="3.10 A"/>
    <property type="chains" value="L2/l2=2-254"/>
</dbReference>
<dbReference type="PDB" id="4U4O">
    <property type="method" value="X-ray"/>
    <property type="resolution" value="3.60 A"/>
    <property type="chains" value="L2/l2=2-254"/>
</dbReference>
<dbReference type="PDB" id="4U4Q">
    <property type="method" value="X-ray"/>
    <property type="resolution" value="3.00 A"/>
    <property type="chains" value="L2/l2=2-254"/>
</dbReference>
<dbReference type="PDB" id="4U4R">
    <property type="method" value="X-ray"/>
    <property type="resolution" value="2.80 A"/>
    <property type="chains" value="L2/l2=2-254"/>
</dbReference>
<dbReference type="PDB" id="4U4U">
    <property type="method" value="X-ray"/>
    <property type="resolution" value="3.00 A"/>
    <property type="chains" value="L2/l2=2-254"/>
</dbReference>
<dbReference type="PDB" id="4U4Y">
    <property type="method" value="X-ray"/>
    <property type="resolution" value="3.20 A"/>
    <property type="chains" value="L2/l2=2-254"/>
</dbReference>
<dbReference type="PDB" id="4U4Z">
    <property type="method" value="X-ray"/>
    <property type="resolution" value="3.10 A"/>
    <property type="chains" value="L2/l2=2-254"/>
</dbReference>
<dbReference type="PDB" id="4U50">
    <property type="method" value="X-ray"/>
    <property type="resolution" value="3.20 A"/>
    <property type="chains" value="L2/l2=2-254"/>
</dbReference>
<dbReference type="PDB" id="4U51">
    <property type="method" value="X-ray"/>
    <property type="resolution" value="3.20 A"/>
    <property type="chains" value="L2/l2=2-254"/>
</dbReference>
<dbReference type="PDB" id="4U52">
    <property type="method" value="X-ray"/>
    <property type="resolution" value="3.00 A"/>
    <property type="chains" value="L2/l2=2-254"/>
</dbReference>
<dbReference type="PDB" id="4U53">
    <property type="method" value="X-ray"/>
    <property type="resolution" value="3.30 A"/>
    <property type="chains" value="L2/l2=2-254"/>
</dbReference>
<dbReference type="PDB" id="4U55">
    <property type="method" value="X-ray"/>
    <property type="resolution" value="3.20 A"/>
    <property type="chains" value="L2/l2=2-254"/>
</dbReference>
<dbReference type="PDB" id="4U56">
    <property type="method" value="X-ray"/>
    <property type="resolution" value="3.45 A"/>
    <property type="chains" value="L2/l2=2-254"/>
</dbReference>
<dbReference type="PDB" id="4U6F">
    <property type="method" value="X-ray"/>
    <property type="resolution" value="3.10 A"/>
    <property type="chains" value="L2/l2=2-254"/>
</dbReference>
<dbReference type="PDB" id="4V4B">
    <property type="method" value="EM"/>
    <property type="resolution" value="11.70 A"/>
    <property type="chains" value="BB=2-254"/>
</dbReference>
<dbReference type="PDB" id="4V5Z">
    <property type="method" value="EM"/>
    <property type="resolution" value="8.70 A"/>
    <property type="chains" value="Ba=1-254"/>
</dbReference>
<dbReference type="PDB" id="4V6I">
    <property type="method" value="EM"/>
    <property type="resolution" value="8.80 A"/>
    <property type="chains" value="BB=1-254"/>
</dbReference>
<dbReference type="PDB" id="4V7F">
    <property type="method" value="EM"/>
    <property type="resolution" value="8.70 A"/>
    <property type="chains" value="B=1-254"/>
</dbReference>
<dbReference type="PDB" id="4V7R">
    <property type="method" value="X-ray"/>
    <property type="resolution" value="4.00 A"/>
    <property type="chains" value="BB/DB=1-254"/>
</dbReference>
<dbReference type="PDB" id="4V88">
    <property type="method" value="X-ray"/>
    <property type="resolution" value="3.00 A"/>
    <property type="chains" value="BA/DA=1-254"/>
</dbReference>
<dbReference type="PDB" id="4V91">
    <property type="method" value="EM"/>
    <property type="resolution" value="3.70 A"/>
    <property type="chains" value="A=1-254"/>
</dbReference>
<dbReference type="PDB" id="5APN">
    <property type="method" value="EM"/>
    <property type="resolution" value="3.91 A"/>
    <property type="chains" value="A=1-254"/>
</dbReference>
<dbReference type="PDB" id="5APO">
    <property type="method" value="EM"/>
    <property type="resolution" value="3.41 A"/>
    <property type="chains" value="A=1-254"/>
</dbReference>
<dbReference type="PDB" id="5DAT">
    <property type="method" value="X-ray"/>
    <property type="resolution" value="3.15 A"/>
    <property type="chains" value="L2/l2=2-254"/>
</dbReference>
<dbReference type="PDB" id="5DC3">
    <property type="method" value="X-ray"/>
    <property type="resolution" value="3.25 A"/>
    <property type="chains" value="L2/l2=2-254"/>
</dbReference>
<dbReference type="PDB" id="5DGE">
    <property type="method" value="X-ray"/>
    <property type="resolution" value="3.45 A"/>
    <property type="chains" value="L2/l2=2-254"/>
</dbReference>
<dbReference type="PDB" id="5DGF">
    <property type="method" value="X-ray"/>
    <property type="resolution" value="3.30 A"/>
    <property type="chains" value="L2/l2=2-254"/>
</dbReference>
<dbReference type="PDB" id="5DGV">
    <property type="method" value="X-ray"/>
    <property type="resolution" value="3.10 A"/>
    <property type="chains" value="L2/l2=2-254"/>
</dbReference>
<dbReference type="PDB" id="5FCI">
    <property type="method" value="X-ray"/>
    <property type="resolution" value="3.40 A"/>
    <property type="chains" value="L2/l2=2-254"/>
</dbReference>
<dbReference type="PDB" id="5FCJ">
    <property type="method" value="X-ray"/>
    <property type="resolution" value="3.10 A"/>
    <property type="chains" value="L2/l2=2-254"/>
</dbReference>
<dbReference type="PDB" id="5GAK">
    <property type="method" value="EM"/>
    <property type="resolution" value="3.88 A"/>
    <property type="chains" value="E=1-254"/>
</dbReference>
<dbReference type="PDB" id="5H4P">
    <property type="method" value="EM"/>
    <property type="resolution" value="3.07 A"/>
    <property type="chains" value="A=2-247"/>
</dbReference>
<dbReference type="PDB" id="5I4L">
    <property type="method" value="X-ray"/>
    <property type="resolution" value="3.10 A"/>
    <property type="chains" value="L2/l2=2-253"/>
</dbReference>
<dbReference type="PDB" id="5JCS">
    <property type="method" value="EM"/>
    <property type="resolution" value="9.50 A"/>
    <property type="chains" value="A=1-254"/>
</dbReference>
<dbReference type="PDB" id="5JUO">
    <property type="method" value="EM"/>
    <property type="resolution" value="4.00 A"/>
    <property type="chains" value="F=1-254"/>
</dbReference>
<dbReference type="PDB" id="5JUP">
    <property type="method" value="EM"/>
    <property type="resolution" value="3.50 A"/>
    <property type="chains" value="F=1-254"/>
</dbReference>
<dbReference type="PDB" id="5JUS">
    <property type="method" value="EM"/>
    <property type="resolution" value="4.20 A"/>
    <property type="chains" value="F=1-254"/>
</dbReference>
<dbReference type="PDB" id="5JUT">
    <property type="method" value="EM"/>
    <property type="resolution" value="4.00 A"/>
    <property type="chains" value="F=1-254"/>
</dbReference>
<dbReference type="PDB" id="5JUU">
    <property type="method" value="EM"/>
    <property type="resolution" value="4.00 A"/>
    <property type="chains" value="F=1-254"/>
</dbReference>
<dbReference type="PDB" id="5LYB">
    <property type="method" value="X-ray"/>
    <property type="resolution" value="3.25 A"/>
    <property type="chains" value="L2/l2=2-253"/>
</dbReference>
<dbReference type="PDB" id="5M1J">
    <property type="method" value="EM"/>
    <property type="resolution" value="3.30 A"/>
    <property type="chains" value="A5=2-253"/>
</dbReference>
<dbReference type="PDB" id="5MC6">
    <property type="method" value="EM"/>
    <property type="resolution" value="3.80 A"/>
    <property type="chains" value="AW=1-254"/>
</dbReference>
<dbReference type="PDB" id="5MEI">
    <property type="method" value="X-ray"/>
    <property type="resolution" value="3.50 A"/>
    <property type="chains" value="CD/j=2-253"/>
</dbReference>
<dbReference type="PDB" id="5NDG">
    <property type="method" value="X-ray"/>
    <property type="resolution" value="3.70 A"/>
    <property type="chains" value="L2/l2=2-253"/>
</dbReference>
<dbReference type="PDB" id="5NDV">
    <property type="method" value="X-ray"/>
    <property type="resolution" value="3.30 A"/>
    <property type="chains" value="L2/l2=2-249"/>
</dbReference>
<dbReference type="PDB" id="5NDW">
    <property type="method" value="X-ray"/>
    <property type="resolution" value="3.70 A"/>
    <property type="chains" value="L2/l2=2-253"/>
</dbReference>
<dbReference type="PDB" id="5OBM">
    <property type="method" value="X-ray"/>
    <property type="resolution" value="3.40 A"/>
    <property type="chains" value="L2/l2=2-253"/>
</dbReference>
<dbReference type="PDB" id="5ON6">
    <property type="method" value="X-ray"/>
    <property type="resolution" value="3.10 A"/>
    <property type="chains" value="CD/j=2-253"/>
</dbReference>
<dbReference type="PDB" id="5T62">
    <property type="method" value="EM"/>
    <property type="resolution" value="3.30 A"/>
    <property type="chains" value="D=1-254"/>
</dbReference>
<dbReference type="PDB" id="5T6R">
    <property type="method" value="EM"/>
    <property type="resolution" value="4.50 A"/>
    <property type="chains" value="D=1-254"/>
</dbReference>
<dbReference type="PDB" id="5TBW">
    <property type="method" value="X-ray"/>
    <property type="resolution" value="3.00 A"/>
    <property type="chains" value="CD/j=2-253"/>
</dbReference>
<dbReference type="PDB" id="5TGA">
    <property type="method" value="X-ray"/>
    <property type="resolution" value="3.30 A"/>
    <property type="chains" value="L2/l2=2-253"/>
</dbReference>
<dbReference type="PDB" id="5TGM">
    <property type="method" value="X-ray"/>
    <property type="resolution" value="3.50 A"/>
    <property type="chains" value="L2/l2=2-253"/>
</dbReference>
<dbReference type="PDB" id="6FT6">
    <property type="method" value="EM"/>
    <property type="resolution" value="3.90 A"/>
    <property type="chains" value="A=1-254"/>
</dbReference>
<dbReference type="PDB" id="6GQ1">
    <property type="method" value="EM"/>
    <property type="resolution" value="4.40 A"/>
    <property type="chains" value="A=2-253"/>
</dbReference>
<dbReference type="PDB" id="6GQB">
    <property type="method" value="EM"/>
    <property type="resolution" value="3.90 A"/>
    <property type="chains" value="A=2-253"/>
</dbReference>
<dbReference type="PDB" id="6GQV">
    <property type="method" value="EM"/>
    <property type="resolution" value="4.00 A"/>
    <property type="chains" value="A=2-253"/>
</dbReference>
<dbReference type="PDB" id="6HD7">
    <property type="method" value="EM"/>
    <property type="resolution" value="3.40 A"/>
    <property type="chains" value="E=1-254"/>
</dbReference>
<dbReference type="PDB" id="6HHQ">
    <property type="method" value="X-ray"/>
    <property type="resolution" value="3.10 A"/>
    <property type="chains" value="CD/j=1-254"/>
</dbReference>
<dbReference type="PDB" id="6I7O">
    <property type="method" value="EM"/>
    <property type="resolution" value="5.30 A"/>
    <property type="chains" value="AW/XW=2-253"/>
</dbReference>
<dbReference type="PDB" id="6M62">
    <property type="method" value="EM"/>
    <property type="resolution" value="3.20 A"/>
    <property type="chains" value="A=1-254"/>
</dbReference>
<dbReference type="PDB" id="6N8J">
    <property type="method" value="EM"/>
    <property type="resolution" value="3.50 A"/>
    <property type="chains" value="A=1-254"/>
</dbReference>
<dbReference type="PDB" id="6N8K">
    <property type="method" value="EM"/>
    <property type="resolution" value="3.60 A"/>
    <property type="chains" value="A=1-254"/>
</dbReference>
<dbReference type="PDB" id="6N8L">
    <property type="method" value="EM"/>
    <property type="resolution" value="3.60 A"/>
    <property type="chains" value="A=1-254"/>
</dbReference>
<dbReference type="PDB" id="6N8M">
    <property type="method" value="EM"/>
    <property type="resolution" value="3.50 A"/>
    <property type="chains" value="D=1-254"/>
</dbReference>
<dbReference type="PDB" id="6N8N">
    <property type="method" value="EM"/>
    <property type="resolution" value="3.80 A"/>
    <property type="chains" value="D=1-254"/>
</dbReference>
<dbReference type="PDB" id="6N8O">
    <property type="method" value="EM"/>
    <property type="resolution" value="3.50 A"/>
    <property type="chains" value="D=1-254"/>
</dbReference>
<dbReference type="PDB" id="6OIG">
    <property type="method" value="EM"/>
    <property type="resolution" value="3.80 A"/>
    <property type="chains" value="A=2-253"/>
</dbReference>
<dbReference type="PDB" id="6Q8Y">
    <property type="method" value="EM"/>
    <property type="resolution" value="3.10 A"/>
    <property type="chains" value="AW=2-253"/>
</dbReference>
<dbReference type="PDB" id="6QIK">
    <property type="method" value="EM"/>
    <property type="resolution" value="3.10 A"/>
    <property type="chains" value="B=1-254"/>
</dbReference>
<dbReference type="PDB" id="6QT0">
    <property type="method" value="EM"/>
    <property type="resolution" value="3.40 A"/>
    <property type="chains" value="B=1-254"/>
</dbReference>
<dbReference type="PDB" id="6QTZ">
    <property type="method" value="EM"/>
    <property type="resolution" value="3.50 A"/>
    <property type="chains" value="B=1-254"/>
</dbReference>
<dbReference type="PDB" id="6R84">
    <property type="method" value="EM"/>
    <property type="resolution" value="3.60 A"/>
    <property type="chains" value="E=2-253"/>
</dbReference>
<dbReference type="PDB" id="6R86">
    <property type="method" value="EM"/>
    <property type="resolution" value="3.40 A"/>
    <property type="chains" value="E=2-253"/>
</dbReference>
<dbReference type="PDB" id="6R87">
    <property type="method" value="EM"/>
    <property type="resolution" value="3.40 A"/>
    <property type="chains" value="E=2-253"/>
</dbReference>
<dbReference type="PDB" id="6RI5">
    <property type="method" value="EM"/>
    <property type="resolution" value="3.30 A"/>
    <property type="chains" value="B=1-254"/>
</dbReference>
<dbReference type="PDB" id="6RZZ">
    <property type="method" value="EM"/>
    <property type="resolution" value="3.20 A"/>
    <property type="chains" value="B=1-254"/>
</dbReference>
<dbReference type="PDB" id="6S05">
    <property type="method" value="EM"/>
    <property type="resolution" value="3.90 A"/>
    <property type="chains" value="B=1-254"/>
</dbReference>
<dbReference type="PDB" id="6S47">
    <property type="method" value="EM"/>
    <property type="resolution" value="3.28 A"/>
    <property type="chains" value="AD=2-253"/>
</dbReference>
<dbReference type="PDB" id="6SNT">
    <property type="method" value="EM"/>
    <property type="resolution" value="2.80 A"/>
    <property type="chains" value="h=1-254"/>
</dbReference>
<dbReference type="PDB" id="6SV4">
    <property type="method" value="EM"/>
    <property type="resolution" value="3.30 A"/>
    <property type="chains" value="AW/XW/zW=1-254"/>
</dbReference>
<dbReference type="PDB" id="6T4Q">
    <property type="method" value="EM"/>
    <property type="resolution" value="2.60 A"/>
    <property type="chains" value="LA=2-252"/>
</dbReference>
<dbReference type="PDB" id="6T7I">
    <property type="method" value="EM"/>
    <property type="resolution" value="3.20 A"/>
    <property type="chains" value="LA=1-254"/>
</dbReference>
<dbReference type="PDB" id="6T7T">
    <property type="method" value="EM"/>
    <property type="resolution" value="3.10 A"/>
    <property type="chains" value="LA=1-254"/>
</dbReference>
<dbReference type="PDB" id="6T83">
    <property type="method" value="EM"/>
    <property type="resolution" value="4.00 A"/>
    <property type="chains" value="Ay/Da=1-254"/>
</dbReference>
<dbReference type="PDB" id="6TB3">
    <property type="method" value="EM"/>
    <property type="resolution" value="2.80 A"/>
    <property type="chains" value="AW=2-252"/>
</dbReference>
<dbReference type="PDB" id="6TNU">
    <property type="method" value="EM"/>
    <property type="resolution" value="3.10 A"/>
    <property type="chains" value="AW=2-252"/>
</dbReference>
<dbReference type="PDB" id="6WOO">
    <property type="method" value="EM"/>
    <property type="resolution" value="2.90 A"/>
    <property type="chains" value="A=2-250"/>
</dbReference>
<dbReference type="PDB" id="6XIQ">
    <property type="method" value="EM"/>
    <property type="resolution" value="4.20 A"/>
    <property type="chains" value="A=1-254"/>
</dbReference>
<dbReference type="PDB" id="6XIR">
    <property type="method" value="EM"/>
    <property type="resolution" value="3.20 A"/>
    <property type="chains" value="A=1-254"/>
</dbReference>
<dbReference type="PDB" id="6YLG">
    <property type="method" value="EM"/>
    <property type="resolution" value="3.00 A"/>
    <property type="chains" value="A=1-254"/>
</dbReference>
<dbReference type="PDB" id="6YLH">
    <property type="method" value="EM"/>
    <property type="resolution" value="3.10 A"/>
    <property type="chains" value="A=1-254"/>
</dbReference>
<dbReference type="PDB" id="6YLY">
    <property type="method" value="EM"/>
    <property type="resolution" value="3.80 A"/>
    <property type="chains" value="A=1-254"/>
</dbReference>
<dbReference type="PDB" id="6Z6J">
    <property type="method" value="EM"/>
    <property type="resolution" value="3.40 A"/>
    <property type="chains" value="LA=1-254"/>
</dbReference>
<dbReference type="PDB" id="6Z6K">
    <property type="method" value="EM"/>
    <property type="resolution" value="3.40 A"/>
    <property type="chains" value="LA=1-254"/>
</dbReference>
<dbReference type="PDB" id="7AZY">
    <property type="method" value="EM"/>
    <property type="resolution" value="2.88 A"/>
    <property type="chains" value="x=1-254"/>
</dbReference>
<dbReference type="PDB" id="7B7D">
    <property type="method" value="EM"/>
    <property type="resolution" value="3.30 A"/>
    <property type="chains" value="LD=2-252"/>
</dbReference>
<dbReference type="PDB" id="7BT6">
    <property type="method" value="EM"/>
    <property type="resolution" value="3.12 A"/>
    <property type="chains" value="A=1-254"/>
</dbReference>
<dbReference type="PDB" id="7BTB">
    <property type="method" value="EM"/>
    <property type="resolution" value="3.22 A"/>
    <property type="chains" value="A=1-254"/>
</dbReference>
<dbReference type="PDB" id="7MPI">
    <property type="method" value="EM"/>
    <property type="resolution" value="3.05 A"/>
    <property type="chains" value="AA=2-248"/>
</dbReference>
<dbReference type="PDB" id="7MPJ">
    <property type="method" value="EM"/>
    <property type="resolution" value="2.70 A"/>
    <property type="chains" value="AA=2-248"/>
</dbReference>
<dbReference type="PDB" id="7N8B">
    <property type="method" value="EM"/>
    <property type="resolution" value="3.05 A"/>
    <property type="chains" value="AA=2-248"/>
</dbReference>
<dbReference type="PDB" id="7NRC">
    <property type="method" value="EM"/>
    <property type="resolution" value="3.90 A"/>
    <property type="chains" value="LD=2-252"/>
</dbReference>
<dbReference type="PDB" id="7NRD">
    <property type="method" value="EM"/>
    <property type="resolution" value="4.36 A"/>
    <property type="chains" value="LD=2-252"/>
</dbReference>
<dbReference type="PDB" id="7OF1">
    <property type="method" value="EM"/>
    <property type="resolution" value="3.10 A"/>
    <property type="chains" value="A=1-254"/>
</dbReference>
<dbReference type="PDB" id="7OH3">
    <property type="method" value="EM"/>
    <property type="resolution" value="3.40 A"/>
    <property type="chains" value="A=1-254"/>
</dbReference>
<dbReference type="PDB" id="7OHQ">
    <property type="method" value="EM"/>
    <property type="resolution" value="3.10 A"/>
    <property type="chains" value="A=1-254"/>
</dbReference>
<dbReference type="PDB" id="7TOO">
    <property type="method" value="EM"/>
    <property type="resolution" value="2.70 A"/>
    <property type="chains" value="AL02=1-254"/>
</dbReference>
<dbReference type="PDB" id="7TOP">
    <property type="method" value="EM"/>
    <property type="resolution" value="2.40 A"/>
    <property type="chains" value="AL02=1-254"/>
</dbReference>
<dbReference type="PDB" id="7U0H">
    <property type="method" value="EM"/>
    <property type="resolution" value="2.76 A"/>
    <property type="chains" value="A=1-254"/>
</dbReference>
<dbReference type="PDB" id="7UG6">
    <property type="method" value="EM"/>
    <property type="resolution" value="2.90 A"/>
    <property type="chains" value="A=1-254"/>
</dbReference>
<dbReference type="PDB" id="7UOO">
    <property type="method" value="EM"/>
    <property type="resolution" value="2.34 A"/>
    <property type="chains" value="A=1-254"/>
</dbReference>
<dbReference type="PDB" id="7UQB">
    <property type="method" value="EM"/>
    <property type="resolution" value="2.43 A"/>
    <property type="chains" value="A=1-254"/>
</dbReference>
<dbReference type="PDB" id="7UQZ">
    <property type="method" value="EM"/>
    <property type="resolution" value="2.44 A"/>
    <property type="chains" value="A=1-254"/>
</dbReference>
<dbReference type="PDB" id="7V08">
    <property type="method" value="EM"/>
    <property type="resolution" value="2.36 A"/>
    <property type="chains" value="A=1-254"/>
</dbReference>
<dbReference type="PDB" id="7Z34">
    <property type="method" value="EM"/>
    <property type="resolution" value="3.80 A"/>
    <property type="chains" value="A=1-254"/>
</dbReference>
<dbReference type="PDB" id="7ZPQ">
    <property type="method" value="EM"/>
    <property type="resolution" value="3.47 A"/>
    <property type="chains" value="BA=2-252"/>
</dbReference>
<dbReference type="PDB" id="7ZRS">
    <property type="method" value="EM"/>
    <property type="resolution" value="4.80 A"/>
    <property type="chains" value="BA=2-252"/>
</dbReference>
<dbReference type="PDB" id="7ZS5">
    <property type="method" value="EM"/>
    <property type="resolution" value="3.20 A"/>
    <property type="chains" value="BC=2-253"/>
</dbReference>
<dbReference type="PDB" id="7ZUW">
    <property type="method" value="EM"/>
    <property type="resolution" value="4.30 A"/>
    <property type="chains" value="BA=2-252"/>
</dbReference>
<dbReference type="PDB" id="7ZUX">
    <property type="method" value="EM"/>
    <property type="resolution" value="2.50 A"/>
    <property type="chains" value="EA=2-252"/>
</dbReference>
<dbReference type="PDB" id="7ZW0">
    <property type="method" value="EM"/>
    <property type="resolution" value="2.40 A"/>
    <property type="chains" value="LE=1-254"/>
</dbReference>
<dbReference type="PDB" id="8AAF">
    <property type="method" value="EM"/>
    <property type="resolution" value="2.50 A"/>
    <property type="chains" value="j=1-254"/>
</dbReference>
<dbReference type="PDB" id="8AGT">
    <property type="method" value="EM"/>
    <property type="resolution" value="2.60 A"/>
    <property type="chains" value="j=1-254"/>
</dbReference>
<dbReference type="PDB" id="8AGU">
    <property type="method" value="EM"/>
    <property type="resolution" value="2.70 A"/>
    <property type="chains" value="j=1-254"/>
</dbReference>
<dbReference type="PDB" id="8AGV">
    <property type="method" value="EM"/>
    <property type="resolution" value="2.60 A"/>
    <property type="chains" value="j=1-254"/>
</dbReference>
<dbReference type="PDB" id="8AGW">
    <property type="method" value="EM"/>
    <property type="resolution" value="2.60 A"/>
    <property type="chains" value="j=1-254"/>
</dbReference>
<dbReference type="PDB" id="8AGX">
    <property type="method" value="EM"/>
    <property type="resolution" value="2.40 A"/>
    <property type="chains" value="j=1-254"/>
</dbReference>
<dbReference type="PDB" id="8AGZ">
    <property type="method" value="EM"/>
    <property type="resolution" value="2.60 A"/>
    <property type="chains" value="j=1-254"/>
</dbReference>
<dbReference type="PDB" id="8BIP">
    <property type="method" value="EM"/>
    <property type="resolution" value="3.10 A"/>
    <property type="chains" value="LA=2-252"/>
</dbReference>
<dbReference type="PDB" id="8BJQ">
    <property type="method" value="EM"/>
    <property type="resolution" value="3.80 A"/>
    <property type="chains" value="LA=2-252"/>
</dbReference>
<dbReference type="PDB" id="8BN3">
    <property type="method" value="EM"/>
    <property type="resolution" value="2.40 A"/>
    <property type="chains" value="L2=2-253"/>
</dbReference>
<dbReference type="PDB" id="8BQD">
    <property type="method" value="EM"/>
    <property type="resolution" value="3.90 A"/>
    <property type="chains" value="AW=2-252"/>
</dbReference>
<dbReference type="PDB" id="8BQX">
    <property type="method" value="EM"/>
    <property type="resolution" value="3.80 A"/>
    <property type="chains" value="AW=2-252"/>
</dbReference>
<dbReference type="PDB" id="8CCS">
    <property type="method" value="EM"/>
    <property type="resolution" value="1.97 A"/>
    <property type="chains" value="EE=1-254"/>
</dbReference>
<dbReference type="PDB" id="8CDL">
    <property type="method" value="EM"/>
    <property type="resolution" value="2.72 A"/>
    <property type="chains" value="EE=1-254"/>
</dbReference>
<dbReference type="PDB" id="8CDR">
    <property type="method" value="EM"/>
    <property type="resolution" value="2.04 A"/>
    <property type="chains" value="EE=1-254"/>
</dbReference>
<dbReference type="PDB" id="8CEH">
    <property type="method" value="EM"/>
    <property type="resolution" value="2.05 A"/>
    <property type="chains" value="EE=1-254"/>
</dbReference>
<dbReference type="PDB" id="8CF5">
    <property type="method" value="EM"/>
    <property type="resolution" value="2.71 A"/>
    <property type="chains" value="EE=1-254"/>
</dbReference>
<dbReference type="PDB" id="8CG8">
    <property type="method" value="EM"/>
    <property type="resolution" value="2.57 A"/>
    <property type="chains" value="EE=1-254"/>
</dbReference>
<dbReference type="PDB" id="8CGN">
    <property type="method" value="EM"/>
    <property type="resolution" value="2.28 A"/>
    <property type="chains" value="EE=1-254"/>
</dbReference>
<dbReference type="PDB" id="8CIV">
    <property type="method" value="EM"/>
    <property type="resolution" value="2.47 A"/>
    <property type="chains" value="EE=1-254"/>
</dbReference>
<dbReference type="PDB" id="8CKU">
    <property type="method" value="EM"/>
    <property type="resolution" value="3.11 A"/>
    <property type="chains" value="EE=1-254"/>
</dbReference>
<dbReference type="PDB" id="8CMJ">
    <property type="method" value="EM"/>
    <property type="resolution" value="3.79 A"/>
    <property type="chains" value="EE=1-254"/>
</dbReference>
<dbReference type="PDB" id="8EUB">
    <property type="method" value="EM"/>
    <property type="resolution" value="2.52 A"/>
    <property type="chains" value="AA=1-254"/>
</dbReference>
<dbReference type="PDB" id="8EVP">
    <property type="method" value="EM"/>
    <property type="resolution" value="2.38 A"/>
    <property type="chains" value="AA=1-254"/>
</dbReference>
<dbReference type="PDB" id="8EVQ">
    <property type="method" value="EM"/>
    <property type="resolution" value="2.72 A"/>
    <property type="chains" value="AA=1-254"/>
</dbReference>
<dbReference type="PDB" id="8EVR">
    <property type="method" value="EM"/>
    <property type="resolution" value="2.87 A"/>
    <property type="chains" value="AA=1-254"/>
</dbReference>
<dbReference type="PDB" id="8EVS">
    <property type="method" value="EM"/>
    <property type="resolution" value="2.62 A"/>
    <property type="chains" value="AA=1-254"/>
</dbReference>
<dbReference type="PDB" id="8EVT">
    <property type="method" value="EM"/>
    <property type="resolution" value="2.20 A"/>
    <property type="chains" value="AA=1-254"/>
</dbReference>
<dbReference type="PDB" id="8EWB">
    <property type="method" value="EM"/>
    <property type="resolution" value="2.87 A"/>
    <property type="chains" value="AA=1-254"/>
</dbReference>
<dbReference type="PDB" id="8EWC">
    <property type="method" value="EM"/>
    <property type="resolution" value="2.45 A"/>
    <property type="chains" value="AA=1-254"/>
</dbReference>
<dbReference type="PDB" id="8HFR">
    <property type="method" value="EM"/>
    <property type="resolution" value="2.64 A"/>
    <property type="chains" value="B4=1-254"/>
</dbReference>
<dbReference type="PDB" id="8K2D">
    <property type="method" value="EM"/>
    <property type="resolution" value="3.20 A"/>
    <property type="chains" value="LA=1-254"/>
</dbReference>
<dbReference type="PDB" id="8K82">
    <property type="method" value="EM"/>
    <property type="resolution" value="3.00 A"/>
    <property type="chains" value="LA=1-254"/>
</dbReference>
<dbReference type="PDB" id="8P4V">
    <property type="method" value="X-ray"/>
    <property type="resolution" value="3.16 A"/>
    <property type="chains" value="CD/j=1-254"/>
</dbReference>
<dbReference type="PDB" id="8P8M">
    <property type="method" value="EM"/>
    <property type="resolution" value="2.66 A"/>
    <property type="chains" value="LF=1-254"/>
</dbReference>
<dbReference type="PDB" id="8P8N">
    <property type="method" value="EM"/>
    <property type="resolution" value="2.15 A"/>
    <property type="chains" value="LF=1-254"/>
</dbReference>
<dbReference type="PDB" id="8P8U">
    <property type="method" value="EM"/>
    <property type="resolution" value="2.23 A"/>
    <property type="chains" value="LF=1-254"/>
</dbReference>
<dbReference type="PDB" id="8P9A">
    <property type="method" value="X-ray"/>
    <property type="resolution" value="2.90 A"/>
    <property type="chains" value="CD/j=1-254"/>
</dbReference>
<dbReference type="PDB" id="8PFR">
    <property type="method" value="EM"/>
    <property type="resolution" value="2.15 A"/>
    <property type="chains" value="LF=1-254"/>
</dbReference>
<dbReference type="PDB" id="8T2X">
    <property type="method" value="EM"/>
    <property type="resolution" value="2.46 A"/>
    <property type="chains" value="AA=1-254"/>
</dbReference>
<dbReference type="PDB" id="8T2Y">
    <property type="method" value="EM"/>
    <property type="resolution" value="2.20 A"/>
    <property type="chains" value="AA=1-254"/>
</dbReference>
<dbReference type="PDB" id="8T2Z">
    <property type="method" value="EM"/>
    <property type="resolution" value="2.40 A"/>
    <property type="chains" value="AA=1-254"/>
</dbReference>
<dbReference type="PDB" id="8T30">
    <property type="method" value="EM"/>
    <property type="resolution" value="2.88 A"/>
    <property type="chains" value="AA=1-254"/>
</dbReference>
<dbReference type="PDB" id="8T3A">
    <property type="method" value="EM"/>
    <property type="resolution" value="2.86 A"/>
    <property type="chains" value="AA=1-254"/>
</dbReference>
<dbReference type="PDB" id="8T3B">
    <property type="method" value="EM"/>
    <property type="resolution" value="3.08 A"/>
    <property type="chains" value="AA=1-254"/>
</dbReference>
<dbReference type="PDB" id="8T3C">
    <property type="method" value="EM"/>
    <property type="resolution" value="3.86 A"/>
    <property type="chains" value="AA=1-254"/>
</dbReference>
<dbReference type="PDB" id="8T3D">
    <property type="method" value="EM"/>
    <property type="resolution" value="2.95 A"/>
    <property type="chains" value="AA=1-254"/>
</dbReference>
<dbReference type="PDB" id="8T3E">
    <property type="method" value="EM"/>
    <property type="resolution" value="3.04 A"/>
    <property type="chains" value="AA=1-254"/>
</dbReference>
<dbReference type="PDB" id="8T3F">
    <property type="method" value="EM"/>
    <property type="resolution" value="3.09 A"/>
    <property type="chains" value="AA=1-254"/>
</dbReference>
<dbReference type="PDB" id="8UT0">
    <property type="method" value="EM"/>
    <property type="resolution" value="3.22 A"/>
    <property type="chains" value="LD=2-252"/>
</dbReference>
<dbReference type="PDB" id="8UTI">
    <property type="method" value="EM"/>
    <property type="resolution" value="3.13 A"/>
    <property type="chains" value="LD=2-252"/>
</dbReference>
<dbReference type="PDB" id="8XU8">
    <property type="method" value="EM"/>
    <property type="resolution" value="3.40 A"/>
    <property type="chains" value="D=2-252"/>
</dbReference>
<dbReference type="PDB" id="8Y0U">
    <property type="method" value="EM"/>
    <property type="resolution" value="3.59 A"/>
    <property type="chains" value="LA=1-254"/>
</dbReference>
<dbReference type="PDB" id="8YLD">
    <property type="method" value="EM"/>
    <property type="resolution" value="3.90 A"/>
    <property type="chains" value="D=2-252"/>
</dbReference>
<dbReference type="PDB" id="8YLR">
    <property type="method" value="EM"/>
    <property type="resolution" value="3.90 A"/>
    <property type="chains" value="D=2-252"/>
</dbReference>
<dbReference type="PDB" id="8Z70">
    <property type="method" value="EM"/>
    <property type="resolution" value="3.20 A"/>
    <property type="chains" value="D=2-252"/>
</dbReference>
<dbReference type="PDB" id="8Z71">
    <property type="method" value="EM"/>
    <property type="resolution" value="3.60 A"/>
    <property type="chains" value="D=2-252"/>
</dbReference>
<dbReference type="PDB" id="9F9S">
    <property type="method" value="EM"/>
    <property type="resolution" value="2.90 A"/>
    <property type="chains" value="Lw/Mw=1-254"/>
</dbReference>
<dbReference type="PDBsum" id="3J6X"/>
<dbReference type="PDBsum" id="3J6Y"/>
<dbReference type="PDBsum" id="3J77"/>
<dbReference type="PDBsum" id="3J78"/>
<dbReference type="PDBsum" id="3JCT"/>
<dbReference type="PDBsum" id="4U3M"/>
<dbReference type="PDBsum" id="4U3N"/>
<dbReference type="PDBsum" id="4U3U"/>
<dbReference type="PDBsum" id="4U4N"/>
<dbReference type="PDBsum" id="4U4O"/>
<dbReference type="PDBsum" id="4U4Q"/>
<dbReference type="PDBsum" id="4U4R"/>
<dbReference type="PDBsum" id="4U4U"/>
<dbReference type="PDBsum" id="4U4Y"/>
<dbReference type="PDBsum" id="4U4Z"/>
<dbReference type="PDBsum" id="4U50"/>
<dbReference type="PDBsum" id="4U51"/>
<dbReference type="PDBsum" id="4U52"/>
<dbReference type="PDBsum" id="4U53"/>
<dbReference type="PDBsum" id="4U55"/>
<dbReference type="PDBsum" id="4U56"/>
<dbReference type="PDBsum" id="4U6F"/>
<dbReference type="PDBsum" id="4V4B"/>
<dbReference type="PDBsum" id="4V5Z"/>
<dbReference type="PDBsum" id="4V6I"/>
<dbReference type="PDBsum" id="4V7F"/>
<dbReference type="PDBsum" id="4V7R"/>
<dbReference type="PDBsum" id="4V88"/>
<dbReference type="PDBsum" id="4V91"/>
<dbReference type="PDBsum" id="5APN"/>
<dbReference type="PDBsum" id="5APO"/>
<dbReference type="PDBsum" id="5DAT"/>
<dbReference type="PDBsum" id="5DC3"/>
<dbReference type="PDBsum" id="5DGE"/>
<dbReference type="PDBsum" id="5DGF"/>
<dbReference type="PDBsum" id="5DGV"/>
<dbReference type="PDBsum" id="5FCI"/>
<dbReference type="PDBsum" id="5FCJ"/>
<dbReference type="PDBsum" id="5GAK"/>
<dbReference type="PDBsum" id="5H4P"/>
<dbReference type="PDBsum" id="5I4L"/>
<dbReference type="PDBsum" id="5JCS"/>
<dbReference type="PDBsum" id="5JUO"/>
<dbReference type="PDBsum" id="5JUP"/>
<dbReference type="PDBsum" id="5JUS"/>
<dbReference type="PDBsum" id="5JUT"/>
<dbReference type="PDBsum" id="5JUU"/>
<dbReference type="PDBsum" id="5LYB"/>
<dbReference type="PDBsum" id="5M1J"/>
<dbReference type="PDBsum" id="5MC6"/>
<dbReference type="PDBsum" id="5MEI"/>
<dbReference type="PDBsum" id="5NDG"/>
<dbReference type="PDBsum" id="5NDV"/>
<dbReference type="PDBsum" id="5NDW"/>
<dbReference type="PDBsum" id="5OBM"/>
<dbReference type="PDBsum" id="5ON6"/>
<dbReference type="PDBsum" id="5T62"/>
<dbReference type="PDBsum" id="5T6R"/>
<dbReference type="PDBsum" id="5TBW"/>
<dbReference type="PDBsum" id="5TGA"/>
<dbReference type="PDBsum" id="5TGM"/>
<dbReference type="PDBsum" id="6FT6"/>
<dbReference type="PDBsum" id="6GQ1"/>
<dbReference type="PDBsum" id="6GQB"/>
<dbReference type="PDBsum" id="6GQV"/>
<dbReference type="PDBsum" id="6HD7"/>
<dbReference type="PDBsum" id="6HHQ"/>
<dbReference type="PDBsum" id="6I7O"/>
<dbReference type="PDBsum" id="6M62"/>
<dbReference type="PDBsum" id="6N8J"/>
<dbReference type="PDBsum" id="6N8K"/>
<dbReference type="PDBsum" id="6N8L"/>
<dbReference type="PDBsum" id="6N8M"/>
<dbReference type="PDBsum" id="6N8N"/>
<dbReference type="PDBsum" id="6N8O"/>
<dbReference type="PDBsum" id="6OIG"/>
<dbReference type="PDBsum" id="6Q8Y"/>
<dbReference type="PDBsum" id="6QIK"/>
<dbReference type="PDBsum" id="6QT0"/>
<dbReference type="PDBsum" id="6QTZ"/>
<dbReference type="PDBsum" id="6R84"/>
<dbReference type="PDBsum" id="6R86"/>
<dbReference type="PDBsum" id="6R87"/>
<dbReference type="PDBsum" id="6RI5"/>
<dbReference type="PDBsum" id="6RZZ"/>
<dbReference type="PDBsum" id="6S05"/>
<dbReference type="PDBsum" id="6S47"/>
<dbReference type="PDBsum" id="6SNT"/>
<dbReference type="PDBsum" id="6SV4"/>
<dbReference type="PDBsum" id="6T4Q"/>
<dbReference type="PDBsum" id="6T7I"/>
<dbReference type="PDBsum" id="6T7T"/>
<dbReference type="PDBsum" id="6T83"/>
<dbReference type="PDBsum" id="6TB3"/>
<dbReference type="PDBsum" id="6TNU"/>
<dbReference type="PDBsum" id="6WOO"/>
<dbReference type="PDBsum" id="6XIQ"/>
<dbReference type="PDBsum" id="6XIR"/>
<dbReference type="PDBsum" id="6YLG"/>
<dbReference type="PDBsum" id="6YLH"/>
<dbReference type="PDBsum" id="6YLY"/>
<dbReference type="PDBsum" id="6Z6J"/>
<dbReference type="PDBsum" id="6Z6K"/>
<dbReference type="PDBsum" id="7AZY"/>
<dbReference type="PDBsum" id="7B7D"/>
<dbReference type="PDBsum" id="7BT6"/>
<dbReference type="PDBsum" id="7BTB"/>
<dbReference type="PDBsum" id="7MPI"/>
<dbReference type="PDBsum" id="7MPJ"/>
<dbReference type="PDBsum" id="7N8B"/>
<dbReference type="PDBsum" id="7NRC"/>
<dbReference type="PDBsum" id="7NRD"/>
<dbReference type="PDBsum" id="7OF1"/>
<dbReference type="PDBsum" id="7OH3"/>
<dbReference type="PDBsum" id="7OHQ"/>
<dbReference type="PDBsum" id="7TOO"/>
<dbReference type="PDBsum" id="7TOP"/>
<dbReference type="PDBsum" id="7U0H"/>
<dbReference type="PDBsum" id="7UG6"/>
<dbReference type="PDBsum" id="7UOO"/>
<dbReference type="PDBsum" id="7UQB"/>
<dbReference type="PDBsum" id="7UQZ"/>
<dbReference type="PDBsum" id="7V08"/>
<dbReference type="PDBsum" id="7Z34"/>
<dbReference type="PDBsum" id="7ZPQ"/>
<dbReference type="PDBsum" id="7ZRS"/>
<dbReference type="PDBsum" id="7ZS5"/>
<dbReference type="PDBsum" id="7ZUW"/>
<dbReference type="PDBsum" id="7ZUX"/>
<dbReference type="PDBsum" id="7ZW0"/>
<dbReference type="PDBsum" id="8AAF"/>
<dbReference type="PDBsum" id="8AGT"/>
<dbReference type="PDBsum" id="8AGU"/>
<dbReference type="PDBsum" id="8AGV"/>
<dbReference type="PDBsum" id="8AGW"/>
<dbReference type="PDBsum" id="8AGX"/>
<dbReference type="PDBsum" id="8AGZ"/>
<dbReference type="PDBsum" id="8BIP"/>
<dbReference type="PDBsum" id="8BJQ"/>
<dbReference type="PDBsum" id="8BN3"/>
<dbReference type="PDBsum" id="8BQD"/>
<dbReference type="PDBsum" id="8BQX"/>
<dbReference type="PDBsum" id="8CCS"/>
<dbReference type="PDBsum" id="8CDL"/>
<dbReference type="PDBsum" id="8CDR"/>
<dbReference type="PDBsum" id="8CEH"/>
<dbReference type="PDBsum" id="8CF5"/>
<dbReference type="PDBsum" id="8CG8"/>
<dbReference type="PDBsum" id="8CGN"/>
<dbReference type="PDBsum" id="8CIV"/>
<dbReference type="PDBsum" id="8CKU"/>
<dbReference type="PDBsum" id="8CMJ"/>
<dbReference type="PDBsum" id="8EUB"/>
<dbReference type="PDBsum" id="8EVP"/>
<dbReference type="PDBsum" id="8EVQ"/>
<dbReference type="PDBsum" id="8EVR"/>
<dbReference type="PDBsum" id="8EVS"/>
<dbReference type="PDBsum" id="8EVT"/>
<dbReference type="PDBsum" id="8EWB"/>
<dbReference type="PDBsum" id="8EWC"/>
<dbReference type="PDBsum" id="8HFR"/>
<dbReference type="PDBsum" id="8K2D"/>
<dbReference type="PDBsum" id="8K82"/>
<dbReference type="PDBsum" id="8P4V"/>
<dbReference type="PDBsum" id="8P8M"/>
<dbReference type="PDBsum" id="8P8N"/>
<dbReference type="PDBsum" id="8P8U"/>
<dbReference type="PDBsum" id="8P9A"/>
<dbReference type="PDBsum" id="8PFR"/>
<dbReference type="PDBsum" id="8T2X"/>
<dbReference type="PDBsum" id="8T2Y"/>
<dbReference type="PDBsum" id="8T2Z"/>
<dbReference type="PDBsum" id="8T30"/>
<dbReference type="PDBsum" id="8T3A"/>
<dbReference type="PDBsum" id="8T3B"/>
<dbReference type="PDBsum" id="8T3C"/>
<dbReference type="PDBsum" id="8T3D"/>
<dbReference type="PDBsum" id="8T3E"/>
<dbReference type="PDBsum" id="8T3F"/>
<dbReference type="PDBsum" id="8UT0"/>
<dbReference type="PDBsum" id="8UTI"/>
<dbReference type="PDBsum" id="8XU8"/>
<dbReference type="PDBsum" id="8Y0U"/>
<dbReference type="PDBsum" id="8YLD"/>
<dbReference type="PDBsum" id="8YLR"/>
<dbReference type="PDBsum" id="8Z70"/>
<dbReference type="PDBsum" id="8Z71"/>
<dbReference type="PDBsum" id="9F9S"/>
<dbReference type="EMDB" id="EMD-0047"/>
<dbReference type="EMDB" id="EMD-0048"/>
<dbReference type="EMDB" id="EMD-0049"/>
<dbReference type="EMDB" id="EMD-0202"/>
<dbReference type="EMDB" id="EMD-0369"/>
<dbReference type="EMDB" id="EMD-0370"/>
<dbReference type="EMDB" id="EMD-0371"/>
<dbReference type="EMDB" id="EMD-0372"/>
<dbReference type="EMDB" id="EMD-0373"/>
<dbReference type="EMDB" id="EMD-0374"/>
<dbReference type="EMDB" id="EMD-10068"/>
<dbReference type="EMDB" id="EMD-10071"/>
<dbReference type="EMDB" id="EMD-10098"/>
<dbReference type="EMDB" id="EMD-10262"/>
<dbReference type="EMDB" id="EMD-10315"/>
<dbReference type="EMDB" id="EMD-10377"/>
<dbReference type="EMDB" id="EMD-10396"/>
<dbReference type="EMDB" id="EMD-10397"/>
<dbReference type="EMDB" id="EMD-10398"/>
<dbReference type="EMDB" id="EMD-10431"/>
<dbReference type="EMDB" id="EMD-10537"/>
<dbReference type="EMDB" id="EMD-10838"/>
<dbReference type="EMDB" id="EMD-10839"/>
<dbReference type="EMDB" id="EMD-10842"/>
<dbReference type="EMDB" id="EMD-11096"/>
<dbReference type="EMDB" id="EMD-11097"/>
<dbReference type="EMDB" id="EMD-11951"/>
<dbReference type="EMDB" id="EMD-12081"/>
<dbReference type="EMDB" id="EMD-12534"/>
<dbReference type="EMDB" id="EMD-12535"/>
<dbReference type="EMDB" id="EMD-12866"/>
<dbReference type="EMDB" id="EMD-12892"/>
<dbReference type="EMDB" id="EMD-12905"/>
<dbReference type="EMDB" id="EMD-14471"/>
<dbReference type="EMDB" id="EMD-14861"/>
<dbReference type="EMDB" id="EMD-14921"/>
<dbReference type="EMDB" id="EMD-14926"/>
<dbReference type="EMDB" id="EMD-14978"/>
<dbReference type="EMDB" id="EMD-14979"/>
<dbReference type="EMDB" id="EMD-14990"/>
<dbReference type="EMDB" id="EMD-15296"/>
<dbReference type="EMDB" id="EMD-15423"/>
<dbReference type="EMDB" id="EMD-15424"/>
<dbReference type="EMDB" id="EMD-15425"/>
<dbReference type="EMDB" id="EMD-15426"/>
<dbReference type="EMDB" id="EMD-15427"/>
<dbReference type="EMDB" id="EMD-15428"/>
<dbReference type="EMDB" id="EMD-16086"/>
<dbReference type="EMDB" id="EMD-16090"/>
<dbReference type="EMDB" id="EMD-16127"/>
<dbReference type="EMDB" id="EMD-16182"/>
<dbReference type="EMDB" id="EMD-16191"/>
<dbReference type="EMDB" id="EMD-16563"/>
<dbReference type="EMDB" id="EMD-16591"/>
<dbReference type="EMDB" id="EMD-16594"/>
<dbReference type="EMDB" id="EMD-16609"/>
<dbReference type="EMDB" id="EMD-16616"/>
<dbReference type="EMDB" id="EMD-16634"/>
<dbReference type="EMDB" id="EMD-16648"/>
<dbReference type="EMDB" id="EMD-16684"/>
<dbReference type="EMDB" id="EMD-16702"/>
<dbReference type="EMDB" id="EMD-16729"/>
<dbReference type="EMDB" id="EMD-17549"/>
<dbReference type="EMDB" id="EMD-17550"/>
<dbReference type="EMDB" id="EMD-17552"/>
<dbReference type="EMDB" id="EMD-17653"/>
<dbReference type="EMDB" id="EMD-20077"/>
<dbReference type="EMDB" id="EMD-21859"/>
<dbReference type="EMDB" id="EMD-22196"/>
<dbReference type="EMDB" id="EMD-22198"/>
<dbReference type="EMDB" id="EMD-23934"/>
<dbReference type="EMDB" id="EMD-23935"/>
<dbReference type="EMDB" id="EMD-24235"/>
<dbReference type="EMDB" id="EMD-26033"/>
<dbReference type="EMDB" id="EMD-26034"/>
<dbReference type="EMDB" id="EMD-26259"/>
<dbReference type="EMDB" id="EMD-26485"/>
<dbReference type="EMDB" id="EMD-26651"/>
<dbReference type="EMDB" id="EMD-26686"/>
<dbReference type="EMDB" id="EMD-26703"/>
<dbReference type="EMDB" id="EMD-26941"/>
<dbReference type="EMDB" id="EMD-28610"/>
<dbReference type="EMDB" id="EMD-28632"/>
<dbReference type="EMDB" id="EMD-28633"/>
<dbReference type="EMDB" id="EMD-28634"/>
<dbReference type="EMDB" id="EMD-28635"/>
<dbReference type="EMDB" id="EMD-28636"/>
<dbReference type="EMDB" id="EMD-28642"/>
<dbReference type="EMDB" id="EMD-28643"/>
<dbReference type="EMDB" id="EMD-30108"/>
<dbReference type="EMDB" id="EMD-30170"/>
<dbReference type="EMDB" id="EMD-30174"/>
<dbReference type="EMDB" id="EMD-3461"/>
<dbReference type="EMDB" id="EMD-34725"/>
<dbReference type="EMDB" id="EMD-36839"/>
<dbReference type="EMDB" id="EMD-36945"/>
<dbReference type="EMDB" id="EMD-38660"/>
<dbReference type="EMDB" id="EMD-40990"/>
<dbReference type="EMDB" id="EMD-40991"/>
<dbReference type="EMDB" id="EMD-40992"/>
<dbReference type="EMDB" id="EMD-40993"/>
<dbReference type="EMDB" id="EMD-40997"/>
<dbReference type="EMDB" id="EMD-40998"/>
<dbReference type="EMDB" id="EMD-40999"/>
<dbReference type="EMDB" id="EMD-41000"/>
<dbReference type="EMDB" id="EMD-41001"/>
<dbReference type="EMDB" id="EMD-41002"/>
<dbReference type="EMDB" id="EMD-4140"/>
<dbReference type="EMDB" id="EMD-42525"/>
<dbReference type="EMDB" id="EMD-42540"/>
<dbReference type="EMDB" id="EMD-4302"/>
<dbReference type="EMDB" id="EMD-4427"/>
<dbReference type="EMDB" id="EMD-4474"/>
<dbReference type="EMDB" id="EMD-4560"/>
<dbReference type="EMDB" id="EMD-4630"/>
<dbReference type="EMDB" id="EMD-4636"/>
<dbReference type="EMDB" id="EMD-4751"/>
<dbReference type="EMDB" id="EMD-4752"/>
<dbReference type="EMDB" id="EMD-4753"/>
<dbReference type="EMDB" id="EMD-4884"/>
<dbReference type="EMDB" id="EMD-50259"/>
<dbReference type="EMDB" id="EMD-8362"/>
<dbReference type="EMDB" id="EMD-8368"/>
<dbReference type="SMR" id="P0CX45"/>
<dbReference type="BioGRID" id="31187">
    <property type="interactions" value="467"/>
</dbReference>
<dbReference type="BioGRID" id="34970">
    <property type="interactions" value="76"/>
</dbReference>
<dbReference type="ComplexPortal" id="CPX-1601">
    <property type="entry name" value="60S cytosolic large ribosomal subunit"/>
</dbReference>
<dbReference type="FunCoup" id="P0CX45">
    <property type="interactions" value="1540"/>
</dbReference>
<dbReference type="IntAct" id="P0CX45">
    <property type="interactions" value="77"/>
</dbReference>
<dbReference type="MINT" id="P0CX45"/>
<dbReference type="STRING" id="4932.YFR031C-A"/>
<dbReference type="MoonProt" id="P0CX45"/>
<dbReference type="CarbonylDB" id="P0CX45"/>
<dbReference type="iPTMnet" id="P0CX45"/>
<dbReference type="PaxDb" id="4932-YFR031C-A"/>
<dbReference type="PeptideAtlas" id="P0CX45"/>
<dbReference type="TopDownProteomics" id="P0CX45"/>
<dbReference type="EnsemblFungi" id="YFR031C-A_mRNA">
    <property type="protein sequence ID" value="YFR031C-A"/>
    <property type="gene ID" value="YFR031C-A"/>
</dbReference>
<dbReference type="EnsemblFungi" id="YIL018W_mRNA">
    <property type="protein sequence ID" value="YIL018W"/>
    <property type="gene ID" value="YIL018W"/>
</dbReference>
<dbReference type="GeneID" id="850590"/>
<dbReference type="KEGG" id="sce:YFR031C-A"/>
<dbReference type="KEGG" id="sce:YIL018W"/>
<dbReference type="AGR" id="SGD:S000002104"/>
<dbReference type="SGD" id="S000002104">
    <property type="gene designation" value="RPL2A"/>
</dbReference>
<dbReference type="VEuPathDB" id="FungiDB:YFR031C-A"/>
<dbReference type="VEuPathDB" id="FungiDB:YIL018W"/>
<dbReference type="eggNOG" id="KOG2309">
    <property type="taxonomic scope" value="Eukaryota"/>
</dbReference>
<dbReference type="HOGENOM" id="CLU_036235_0_3_1"/>
<dbReference type="InParanoid" id="P0CX45"/>
<dbReference type="OMA" id="HPYKFKM"/>
<dbReference type="OrthoDB" id="10267824at2759"/>
<dbReference type="BioCyc" id="YEAST:G3O-30501-MONOMER"/>
<dbReference type="Reactome" id="R-SCE-156827">
    <property type="pathway name" value="L13a-mediated translational silencing of Ceruloplasmin expression"/>
</dbReference>
<dbReference type="Reactome" id="R-SCE-1799339">
    <property type="pathway name" value="SRP-dependent cotranslational protein targeting to membrane"/>
</dbReference>
<dbReference type="Reactome" id="R-SCE-72689">
    <property type="pathway name" value="Formation of a pool of free 40S subunits"/>
</dbReference>
<dbReference type="Reactome" id="R-SCE-72706">
    <property type="pathway name" value="GTP hydrolysis and joining of the 60S ribosomal subunit"/>
</dbReference>
<dbReference type="Reactome" id="R-SCE-975956">
    <property type="pathway name" value="Nonsense Mediated Decay (NMD) independent of the Exon Junction Complex (EJC)"/>
</dbReference>
<dbReference type="Reactome" id="R-SCE-975957">
    <property type="pathway name" value="Nonsense Mediated Decay (NMD) enhanced by the Exon Junction Complex (EJC)"/>
</dbReference>
<dbReference type="BioGRID-ORCS" id="850590">
    <property type="hits" value="7 hits in 10 CRISPR screens"/>
</dbReference>
<dbReference type="BioGRID-ORCS" id="854794">
    <property type="hits" value="9 hits in 10 CRISPR screens"/>
</dbReference>
<dbReference type="PRO" id="PR:P0CX45"/>
<dbReference type="Proteomes" id="UP000002311">
    <property type="component" value="Chromosome VI"/>
</dbReference>
<dbReference type="RNAct" id="P0CX45">
    <property type="molecule type" value="protein"/>
</dbReference>
<dbReference type="ExpressionAtlas" id="P0CX45">
    <property type="expression patterns" value="baseline and differential"/>
</dbReference>
<dbReference type="GO" id="GO:0005829">
    <property type="term" value="C:cytosol"/>
    <property type="evidence" value="ECO:0000304"/>
    <property type="project" value="Reactome"/>
</dbReference>
<dbReference type="GO" id="GO:0022625">
    <property type="term" value="C:cytosolic large ribosomal subunit"/>
    <property type="evidence" value="ECO:0000314"/>
    <property type="project" value="SGD"/>
</dbReference>
<dbReference type="GO" id="GO:0003723">
    <property type="term" value="F:RNA binding"/>
    <property type="evidence" value="ECO:0000318"/>
    <property type="project" value="GO_Central"/>
</dbReference>
<dbReference type="GO" id="GO:0019843">
    <property type="term" value="F:rRNA binding"/>
    <property type="evidence" value="ECO:0007669"/>
    <property type="project" value="UniProtKB-KW"/>
</dbReference>
<dbReference type="GO" id="GO:0003735">
    <property type="term" value="F:structural constituent of ribosome"/>
    <property type="evidence" value="ECO:0000314"/>
    <property type="project" value="SGD"/>
</dbReference>
<dbReference type="GO" id="GO:0002181">
    <property type="term" value="P:cytoplasmic translation"/>
    <property type="evidence" value="ECO:0000314"/>
    <property type="project" value="SGD"/>
</dbReference>
<dbReference type="GO" id="GO:1990145">
    <property type="term" value="P:maintenance of translational fidelity"/>
    <property type="evidence" value="ECO:0000315"/>
    <property type="project" value="SGD"/>
</dbReference>
<dbReference type="GO" id="GO:0042273">
    <property type="term" value="P:ribosomal large subunit biogenesis"/>
    <property type="evidence" value="ECO:0000315"/>
    <property type="project" value="SGD"/>
</dbReference>
<dbReference type="FunFam" id="2.40.50.140:FF:000020">
    <property type="entry name" value="60S ribosomal protein L2"/>
    <property type="match status" value="1"/>
</dbReference>
<dbReference type="FunFam" id="4.10.950.10:FF:000002">
    <property type="entry name" value="60S ribosomal protein L2"/>
    <property type="match status" value="1"/>
</dbReference>
<dbReference type="FunFam" id="2.30.30.30:FF:000006">
    <property type="entry name" value="60S ribosomal protein L8"/>
    <property type="match status" value="1"/>
</dbReference>
<dbReference type="Gene3D" id="2.30.30.30">
    <property type="match status" value="1"/>
</dbReference>
<dbReference type="Gene3D" id="2.40.50.140">
    <property type="entry name" value="Nucleic acid-binding proteins"/>
    <property type="match status" value="1"/>
</dbReference>
<dbReference type="Gene3D" id="4.10.950.10">
    <property type="entry name" value="Ribosomal protein L2, domain 3"/>
    <property type="match status" value="1"/>
</dbReference>
<dbReference type="InterPro" id="IPR012340">
    <property type="entry name" value="NA-bd_OB-fold"/>
</dbReference>
<dbReference type="InterPro" id="IPR014722">
    <property type="entry name" value="Rib_uL2_dom2"/>
</dbReference>
<dbReference type="InterPro" id="IPR002171">
    <property type="entry name" value="Ribosomal_uL2"/>
</dbReference>
<dbReference type="InterPro" id="IPR022669">
    <property type="entry name" value="Ribosomal_uL2_C"/>
</dbReference>
<dbReference type="InterPro" id="IPR022671">
    <property type="entry name" value="Ribosomal_uL2_CS"/>
</dbReference>
<dbReference type="InterPro" id="IPR014726">
    <property type="entry name" value="Ribosomal_uL2_dom3"/>
</dbReference>
<dbReference type="InterPro" id="IPR022666">
    <property type="entry name" value="Ribosomal_uL2_RNA-bd_dom"/>
</dbReference>
<dbReference type="InterPro" id="IPR008991">
    <property type="entry name" value="Translation_prot_SH3-like_sf"/>
</dbReference>
<dbReference type="PANTHER" id="PTHR13691:SF16">
    <property type="entry name" value="LARGE RIBOSOMAL SUBUNIT PROTEIN UL2"/>
    <property type="match status" value="1"/>
</dbReference>
<dbReference type="PANTHER" id="PTHR13691">
    <property type="entry name" value="RIBOSOMAL PROTEIN L2"/>
    <property type="match status" value="1"/>
</dbReference>
<dbReference type="Pfam" id="PF00181">
    <property type="entry name" value="Ribosomal_L2"/>
    <property type="match status" value="1"/>
</dbReference>
<dbReference type="Pfam" id="PF03947">
    <property type="entry name" value="Ribosomal_L2_C"/>
    <property type="match status" value="1"/>
</dbReference>
<dbReference type="PIRSF" id="PIRSF002158">
    <property type="entry name" value="Ribosomal_L2"/>
    <property type="match status" value="1"/>
</dbReference>
<dbReference type="SMART" id="SM01383">
    <property type="entry name" value="Ribosomal_L2"/>
    <property type="match status" value="1"/>
</dbReference>
<dbReference type="SMART" id="SM01382">
    <property type="entry name" value="Ribosomal_L2_C"/>
    <property type="match status" value="1"/>
</dbReference>
<dbReference type="SUPFAM" id="SSF50249">
    <property type="entry name" value="Nucleic acid-binding proteins"/>
    <property type="match status" value="1"/>
</dbReference>
<dbReference type="SUPFAM" id="SSF50104">
    <property type="entry name" value="Translation proteins SH3-like domain"/>
    <property type="match status" value="1"/>
</dbReference>
<dbReference type="PROSITE" id="PS00467">
    <property type="entry name" value="RIBOSOMAL_L2"/>
    <property type="match status" value="1"/>
</dbReference>
<name>RL2A_YEAST</name>
<organism>
    <name type="scientific">Saccharomyces cerevisiae (strain ATCC 204508 / S288c)</name>
    <name type="common">Baker's yeast</name>
    <dbReference type="NCBI Taxonomy" id="559292"/>
    <lineage>
        <taxon>Eukaryota</taxon>
        <taxon>Fungi</taxon>
        <taxon>Dikarya</taxon>
        <taxon>Ascomycota</taxon>
        <taxon>Saccharomycotina</taxon>
        <taxon>Saccharomycetes</taxon>
        <taxon>Saccharomycetales</taxon>
        <taxon>Saccharomycetaceae</taxon>
        <taxon>Saccharomyces</taxon>
    </lineage>
</organism>
<reference key="1">
    <citation type="journal article" date="1995" name="Mol. Gen. Genet.">
        <title>Characterisation of Saccharomyces cerevisiae genes encoding ribosomal protein YL6.</title>
        <authorList>
            <person name="Moore J."/>
            <person name="Jacobs H.T."/>
            <person name="Kaiser K."/>
        </authorList>
    </citation>
    <scope>NUCLEOTIDE SEQUENCE [GENOMIC DNA]</scope>
    <source>
        <strain>ATCC 204660 / DBY746</strain>
    </source>
</reference>
<reference key="2">
    <citation type="journal article" date="1996" name="Yeast">
        <title>Fifteen open reading frames in a 30.8 kb region of the right arm of chromosome VI from Saccharomyces cerevisiae.</title>
        <authorList>
            <person name="Eki T."/>
            <person name="Naitou M."/>
            <person name="Hagiwara H."/>
            <person name="Abe M."/>
            <person name="Ozawa M."/>
            <person name="Sasanuma S."/>
            <person name="Sasanuma M."/>
            <person name="Tsuchiya Y."/>
            <person name="Shibata T."/>
            <person name="Watanabe K."/>
            <person name="Ono A."/>
            <person name="Yamazaki M."/>
            <person name="Tashiro H."/>
            <person name="Hanaoka F."/>
            <person name="Murakami Y."/>
        </authorList>
    </citation>
    <scope>NUCLEOTIDE SEQUENCE [GENOMIC DNA]</scope>
    <source>
        <strain>ATCC 204511 / S288c / AB972</strain>
    </source>
</reference>
<reference key="3">
    <citation type="journal article" date="1995" name="Nat. Genet.">
        <title>Analysis of the nucleotide sequence of chromosome VI from Saccharomyces cerevisiae.</title>
        <authorList>
            <person name="Murakami Y."/>
            <person name="Naitou M."/>
            <person name="Hagiwara H."/>
            <person name="Shibata T."/>
            <person name="Ozawa M."/>
            <person name="Sasanuma S."/>
            <person name="Sasanuma M."/>
            <person name="Tsuchiya Y."/>
            <person name="Soeda E."/>
            <person name="Yokoyama K."/>
            <person name="Yamazaki M."/>
            <person name="Tashiro H."/>
            <person name="Eki T."/>
        </authorList>
    </citation>
    <scope>NUCLEOTIDE SEQUENCE [LARGE SCALE GENOMIC DNA]</scope>
    <source>
        <strain>ATCC 204508 / S288c</strain>
    </source>
</reference>
<reference key="4">
    <citation type="journal article" date="2014" name="G3 (Bethesda)">
        <title>The reference genome sequence of Saccharomyces cerevisiae: Then and now.</title>
        <authorList>
            <person name="Engel S.R."/>
            <person name="Dietrich F.S."/>
            <person name="Fisk D.G."/>
            <person name="Binkley G."/>
            <person name="Balakrishnan R."/>
            <person name="Costanzo M.C."/>
            <person name="Dwight S.S."/>
            <person name="Hitz B.C."/>
            <person name="Karra K."/>
            <person name="Nash R.S."/>
            <person name="Weng S."/>
            <person name="Wong E.D."/>
            <person name="Lloyd P."/>
            <person name="Skrzypek M.S."/>
            <person name="Miyasato S.R."/>
            <person name="Simison M."/>
            <person name="Cherry J.M."/>
        </authorList>
    </citation>
    <scope>GENOME REANNOTATION</scope>
    <source>
        <strain>ATCC 204508 / S288c</strain>
    </source>
</reference>
<reference key="5">
    <citation type="journal article" date="1984" name="Mol. Gen. Genet.">
        <title>Yeast ribosomal proteins. VIII. Isolation of two proteins and sequence characterization of twenty-four proteins from cytoplasmic ribosomes.</title>
        <authorList>
            <person name="Otaka E."/>
            <person name="Higo K."/>
            <person name="Itoh T."/>
        </authorList>
    </citation>
    <scope>PARTIAL PROTEIN SEQUENCE OF 2-41</scope>
    <scope>CLEAVAGE OF INITIATOR METHIONINE</scope>
</reference>
<reference key="6">
    <citation type="journal article" date="1992" name="J. Biol. Chem.">
        <title>NH2-terminal acetylation of ribosomal proteins of Saccharomyces cerevisiae.</title>
        <authorList>
            <person name="Takakura H."/>
            <person name="Tsunasawa S."/>
            <person name="Miyagi M."/>
            <person name="Warner J.R."/>
        </authorList>
    </citation>
    <scope>PROTEIN SEQUENCE OF 2-21</scope>
</reference>
<reference key="7">
    <citation type="journal article" date="1995" name="Genes Dev.">
        <title>SMC2, a Saccharomyces cerevisiae gene essential for chromosome segregation and condensation, defines a subgroup within the SMC family.</title>
        <authorList>
            <person name="Strunnikov A.V."/>
            <person name="Hogan E."/>
            <person name="Koshland D."/>
        </authorList>
    </citation>
    <scope>NUCLEOTIDE SEQUENCE [GENOMIC DNA] OF 226-254</scope>
</reference>
<reference key="8">
    <citation type="journal article" date="1998" name="Yeast">
        <title>The list of cytoplasmic ribosomal proteins of Saccharomyces cerevisiae.</title>
        <authorList>
            <person name="Planta R.J."/>
            <person name="Mager W.H."/>
        </authorList>
    </citation>
    <scope>NOMENCLATURE</scope>
    <scope>SUBUNIT</scope>
</reference>
<reference key="9">
    <citation type="journal article" date="2002" name="Proc. Natl. Acad. Sci. U.S.A.">
        <title>Direct mass spectrometric analysis of intact proteins of the yeast large ribosomal subunit using capillary LC/FTICR.</title>
        <authorList>
            <person name="Lee S.-W."/>
            <person name="Berger S.J."/>
            <person name="Martinovic S."/>
            <person name="Pasa-Tolic L."/>
            <person name="Anderson G.A."/>
            <person name="Shen Y."/>
            <person name="Zhao R."/>
            <person name="Smith R.D."/>
        </authorList>
    </citation>
    <scope>MASS SPECTROMETRY</scope>
</reference>
<reference key="10">
    <citation type="journal article" date="2003" name="Nature">
        <title>Global analysis of protein localization in budding yeast.</title>
        <authorList>
            <person name="Huh W.-K."/>
            <person name="Falvo J.V."/>
            <person name="Gerke L.C."/>
            <person name="Carroll A.S."/>
            <person name="Howson R.W."/>
            <person name="Weissman J.S."/>
            <person name="O'Shea E.K."/>
        </authorList>
    </citation>
    <scope>SUBCELLULAR LOCATION [LARGE SCALE ANALYSIS]</scope>
</reference>
<reference key="11">
    <citation type="journal article" date="2007" name="Proc. Natl. Acad. Sci. U.S.A.">
        <title>Analysis of phosphorylation sites on proteins from Saccharomyces cerevisiae by electron transfer dissociation (ETD) mass spectrometry.</title>
        <authorList>
            <person name="Chi A."/>
            <person name="Huttenhower C."/>
            <person name="Geer L.Y."/>
            <person name="Coon J.J."/>
            <person name="Syka J.E.P."/>
            <person name="Bai D.L."/>
            <person name="Shabanowitz J."/>
            <person name="Burke D.J."/>
            <person name="Troyanskaya O.G."/>
            <person name="Hunt D.F."/>
        </authorList>
    </citation>
    <scope>PHOSPHORYLATION [LARGE SCALE ANALYSIS] AT SER-52; SER-159; SER-160 AND SER-249</scope>
    <scope>IDENTIFICATION BY MASS SPECTROMETRY [LARGE SCALE ANALYSIS]</scope>
</reference>
<reference key="12">
    <citation type="journal article" date="2009" name="Science">
        <title>Global analysis of Cdk1 substrate phosphorylation sites provides insights into evolution.</title>
        <authorList>
            <person name="Holt L.J."/>
            <person name="Tuch B.B."/>
            <person name="Villen J."/>
            <person name="Johnson A.D."/>
            <person name="Gygi S.P."/>
            <person name="Morgan D.O."/>
        </authorList>
    </citation>
    <scope>PHOSPHORYLATION [LARGE SCALE ANALYSIS] AT SER-95</scope>
    <scope>IDENTIFICATION BY MASS SPECTROMETRY [LARGE SCALE ANALYSIS]</scope>
</reference>
<reference key="13">
    <citation type="journal article" date="2012" name="Proteomics">
        <title>Sites of ubiquitin attachment in Saccharomyces cerevisiae.</title>
        <authorList>
            <person name="Starita L.M."/>
            <person name="Lo R.S."/>
            <person name="Eng J.K."/>
            <person name="von Haller P.D."/>
            <person name="Fields S."/>
        </authorList>
    </citation>
    <scope>UBIQUITINATION [LARGE SCALE ANALYSIS] AT LYS-46; LYS-93; LYS-119 AND LYS-145</scope>
    <scope>IDENTIFICATION BY MASS SPECTROMETRY [LARGE SCALE ANALYSIS]</scope>
</reference>
<reference key="14">
    <citation type="journal article" date="2014" name="Curr. Opin. Struct. Biol.">
        <title>A new system for naming ribosomal proteins.</title>
        <authorList>
            <person name="Ban N."/>
            <person name="Beckmann R."/>
            <person name="Cate J.H.D."/>
            <person name="Dinman J.D."/>
            <person name="Dragon F."/>
            <person name="Ellis S.R."/>
            <person name="Lafontaine D.L.J."/>
            <person name="Lindahl L."/>
            <person name="Liljas A."/>
            <person name="Lipton J.M."/>
            <person name="McAlear M.A."/>
            <person name="Moore P.B."/>
            <person name="Noller H.F."/>
            <person name="Ortega J."/>
            <person name="Panse V.G."/>
            <person name="Ramakrishnan V."/>
            <person name="Spahn C.M.T."/>
            <person name="Steitz T.A."/>
            <person name="Tchorzewski M."/>
            <person name="Tollervey D."/>
            <person name="Warren A.J."/>
            <person name="Williamson J.R."/>
            <person name="Wilson D."/>
            <person name="Yonath A."/>
            <person name="Yusupov M."/>
        </authorList>
    </citation>
    <scope>NOMENCLATURE</scope>
</reference>
<reference key="15">
    <citation type="journal article" date="2001" name="Cell">
        <title>Structure of the 80S ribosome from Saccharomyces cerevisiae -- tRNA-ribosome and subunit-subunit interactions.</title>
        <authorList>
            <person name="Spahn C.M.T."/>
            <person name="Beckmann R."/>
            <person name="Eswar N."/>
            <person name="Penczek P.A."/>
            <person name="Sali A."/>
            <person name="Blobel G."/>
            <person name="Frank J."/>
        </authorList>
    </citation>
    <scope>3D-STRUCTURE MODELING OF 2-245</scope>
    <scope>ELECTRON MICROSCOPY</scope>
</reference>
<reference key="16">
    <citation type="journal article" date="2004" name="EMBO J.">
        <title>Domain movements of elongation factor eEF2 and the eukaryotic 80S ribosome facilitate tRNA translocation.</title>
        <authorList>
            <person name="Spahn C.M.T."/>
            <person name="Gomez-Lorenzo M.G."/>
            <person name="Grassucci R.A."/>
            <person name="Joergensen R."/>
            <person name="Andersen G.R."/>
            <person name="Beckmann R."/>
            <person name="Penczek P.A."/>
            <person name="Ballesta J.P.G."/>
            <person name="Frank J."/>
        </authorList>
    </citation>
    <scope>3D-STRUCTURE MODELING</scope>
    <scope>ELECTRON MICROSCOPY</scope>
</reference>
<reference key="17">
    <citation type="journal article" date="2010" name="Science">
        <title>Crystal structure of the eukaryotic ribosome.</title>
        <authorList>
            <person name="Ben-Shem A."/>
            <person name="Jenner L."/>
            <person name="Yusupova G."/>
            <person name="Yusupov M."/>
        </authorList>
    </citation>
    <scope>X-RAY CRYSTALLOGRAPHY (4.0 ANGSTROMS) OF 80S RIBOSOME</scope>
</reference>
<reference key="18">
    <citation type="journal article" date="2011" name="Science">
        <title>The structure of the eukaryotic ribosome at 3.0 A resolution.</title>
        <authorList>
            <person name="Ben-Shem A."/>
            <person name="Garreau de Loubresse N."/>
            <person name="Melnikov S."/>
            <person name="Jenner L."/>
            <person name="Yusupova G."/>
            <person name="Yusupov M."/>
        </authorList>
    </citation>
    <scope>X-RAY CRYSTALLOGRAPHY (3.0 ANGSTROMS) OF 80S RIBOSOME</scope>
    <scope>SUBUNIT</scope>
    <scope>SUBCELLULAR LOCATION</scope>
</reference>
<protein>
    <recommendedName>
        <fullName evidence="6">Large ribosomal subunit protein uL2A</fullName>
    </recommendedName>
    <alternativeName>
        <fullName evidence="7">60S ribosomal protein L2-A</fullName>
    </alternativeName>
    <alternativeName>
        <fullName>L5</fullName>
    </alternativeName>
    <alternativeName>
        <fullName>RP8</fullName>
    </alternativeName>
    <alternativeName>
        <fullName>YL6</fullName>
    </alternativeName>
</protein>
<evidence type="ECO:0000269" key="1">
    <source>
    </source>
</evidence>
<evidence type="ECO:0000269" key="2">
    <source>
    </source>
</evidence>
<evidence type="ECO:0000269" key="3">
    <source>
    </source>
</evidence>
<evidence type="ECO:0000269" key="4">
    <source>
    </source>
</evidence>
<evidence type="ECO:0000269" key="5">
    <source>
    </source>
</evidence>
<evidence type="ECO:0000303" key="6">
    <source>
    </source>
</evidence>
<evidence type="ECO:0000303" key="7">
    <source>
    </source>
</evidence>
<evidence type="ECO:0000305" key="8"/>
<evidence type="ECO:0000305" key="9">
    <source>
    </source>
</evidence>
<evidence type="ECO:0000305" key="10">
    <source>
    </source>
</evidence>
<evidence type="ECO:0007744" key="11">
    <source>
    </source>
</evidence>
<evidence type="ECO:0007744" key="12">
    <source>
    </source>
</evidence>
<evidence type="ECO:0007744" key="13">
    <source>
    </source>
</evidence>
<evidence type="ECO:0007829" key="14">
    <source>
        <dbReference type="PDB" id="4U3U"/>
    </source>
</evidence>
<evidence type="ECO:0007829" key="15">
    <source>
        <dbReference type="PDB" id="4U4Q"/>
    </source>
</evidence>
<evidence type="ECO:0007829" key="16">
    <source>
        <dbReference type="PDB" id="4U4R"/>
    </source>
</evidence>
<evidence type="ECO:0007829" key="17">
    <source>
        <dbReference type="PDB" id="4U4U"/>
    </source>
</evidence>
<evidence type="ECO:0007829" key="18">
    <source>
        <dbReference type="PDB" id="4U56"/>
    </source>
</evidence>
<keyword id="KW-0002">3D-structure</keyword>
<keyword id="KW-0963">Cytoplasm</keyword>
<keyword id="KW-0903">Direct protein sequencing</keyword>
<keyword id="KW-1017">Isopeptide bond</keyword>
<keyword id="KW-0597">Phosphoprotein</keyword>
<keyword id="KW-1185">Reference proteome</keyword>
<keyword id="KW-0687">Ribonucleoprotein</keyword>
<keyword id="KW-0689">Ribosomal protein</keyword>
<keyword id="KW-0694">RNA-binding</keyword>
<keyword id="KW-0699">rRNA-binding</keyword>
<keyword id="KW-0832">Ubl conjugation</keyword>
<feature type="initiator methionine" description="Removed" evidence="3 4">
    <location>
        <position position="1"/>
    </location>
</feature>
<feature type="chain" id="PRO_0000129761" description="Large ribosomal subunit protein uL2A">
    <location>
        <begin position="2"/>
        <end position="254"/>
    </location>
</feature>
<feature type="modified residue" description="Phosphoserine" evidence="11">
    <location>
        <position position="52"/>
    </location>
</feature>
<feature type="modified residue" description="Phosphoserine" evidence="12">
    <location>
        <position position="95"/>
    </location>
</feature>
<feature type="modified residue" description="Phosphoserine" evidence="11">
    <location>
        <position position="159"/>
    </location>
</feature>
<feature type="modified residue" description="Phosphoserine" evidence="11">
    <location>
        <position position="160"/>
    </location>
</feature>
<feature type="modified residue" description="Phosphoserine" evidence="11">
    <location>
        <position position="249"/>
    </location>
</feature>
<feature type="cross-link" description="Glycyl lysine isopeptide (Lys-Gly) (interchain with G-Cter in ubiquitin)" evidence="13">
    <location>
        <position position="46"/>
    </location>
</feature>
<feature type="cross-link" description="Glycyl lysine isopeptide (Lys-Gly) (interchain with G-Cter in ubiquitin)" evidence="13">
    <location>
        <position position="93"/>
    </location>
</feature>
<feature type="cross-link" description="Glycyl lysine isopeptide (Lys-Gly) (interchain with G-Cter in ubiquitin)" evidence="13">
    <location>
        <position position="119"/>
    </location>
</feature>
<feature type="cross-link" description="Glycyl lysine isopeptide (Lys-Gly) (interchain with G-Cter in ubiquitin)" evidence="13">
    <location>
        <position position="145"/>
    </location>
</feature>
<feature type="helix" evidence="16">
    <location>
        <begin position="6"/>
        <end position="9"/>
    </location>
</feature>
<feature type="helix" evidence="16">
    <location>
        <begin position="10"/>
        <end position="12"/>
    </location>
</feature>
<feature type="helix" evidence="16">
    <location>
        <begin position="14"/>
        <end position="16"/>
    </location>
</feature>
<feature type="helix" evidence="17">
    <location>
        <begin position="20"/>
        <end position="22"/>
    </location>
</feature>
<feature type="helix" evidence="16">
    <location>
        <begin position="34"/>
        <end position="38"/>
    </location>
</feature>
<feature type="strand" evidence="16">
    <location>
        <begin position="41"/>
        <end position="49"/>
    </location>
</feature>
<feature type="strand" evidence="16">
    <location>
        <begin position="58"/>
        <end position="64"/>
    </location>
</feature>
<feature type="strand" evidence="16">
    <location>
        <begin position="68"/>
        <end position="77"/>
    </location>
</feature>
<feature type="strand" evidence="16">
    <location>
        <begin position="87"/>
        <end position="91"/>
    </location>
</feature>
<feature type="strand" evidence="16">
    <location>
        <begin position="101"/>
        <end position="103"/>
    </location>
</feature>
<feature type="helix" evidence="16">
    <location>
        <begin position="104"/>
        <end position="106"/>
    </location>
</feature>
<feature type="strand" evidence="16">
    <location>
        <begin position="112"/>
        <end position="116"/>
    </location>
</feature>
<feature type="strand" evidence="18">
    <location>
        <begin position="118"/>
        <end position="122"/>
    </location>
</feature>
<feature type="strand" evidence="16">
    <location>
        <begin position="134"/>
        <end position="140"/>
    </location>
</feature>
<feature type="turn" evidence="16">
    <location>
        <begin position="141"/>
        <end position="144"/>
    </location>
</feature>
<feature type="strand" evidence="16">
    <location>
        <begin position="145"/>
        <end position="149"/>
    </location>
</feature>
<feature type="strand" evidence="15">
    <location>
        <begin position="151"/>
        <end position="153"/>
    </location>
</feature>
<feature type="strand" evidence="16">
    <location>
        <begin position="155"/>
        <end position="159"/>
    </location>
</feature>
<feature type="strand" evidence="16">
    <location>
        <begin position="163"/>
        <end position="167"/>
    </location>
</feature>
<feature type="strand" evidence="17">
    <location>
        <begin position="169"/>
        <end position="171"/>
    </location>
</feature>
<feature type="helix" evidence="16">
    <location>
        <begin position="174"/>
        <end position="176"/>
    </location>
</feature>
<feature type="helix" evidence="16">
    <location>
        <begin position="182"/>
        <end position="190"/>
    </location>
</feature>
<feature type="strand" evidence="14">
    <location>
        <begin position="191"/>
        <end position="194"/>
    </location>
</feature>
<feature type="helix" evidence="16">
    <location>
        <begin position="201"/>
        <end position="203"/>
    </location>
</feature>
<feature type="helix" evidence="16">
    <location>
        <begin position="206"/>
        <end position="208"/>
    </location>
</feature>
<feature type="turn" evidence="14">
    <location>
        <begin position="210"/>
        <end position="212"/>
    </location>
</feature>
<feature type="turn" evidence="16">
    <location>
        <begin position="214"/>
        <end position="217"/>
    </location>
</feature>
<feature type="strand" evidence="16">
    <location>
        <begin position="223"/>
        <end position="225"/>
    </location>
</feature>
<feature type="turn" evidence="16">
    <location>
        <begin position="231"/>
        <end position="233"/>
    </location>
</feature>
<feature type="strand" evidence="16">
    <location>
        <begin position="236"/>
        <end position="238"/>
    </location>
</feature>
<proteinExistence type="evidence at protein level"/>
<gene>
    <name evidence="7" type="primary">RPL2A</name>
    <name type="synonym">RPL5B</name>
    <name type="ordered locus">YFR031C-A</name>
    <name type="ORF">YFR031BC</name>
</gene>
<comment type="function">
    <text evidence="9">Component of the ribosome, a large ribonucleoprotein complex responsible for the synthesis of proteins in the cell. The small ribosomal subunit (SSU) binds messenger RNAs (mRNAs) and translates the encoded message by selecting cognate aminoacyl-transfer RNA (tRNA) molecules. The large subunit (LSU) contains the ribosomal catalytic site termed the peptidyl transferase center (PTC), which catalyzes the formation of peptide bonds, thereby polymerizing the amino acids delivered by tRNAs into a polypeptide chain. The nascent polypeptides leave the ribosome through a tunnel in the LSU and interact with protein factors that function in enzymatic processing, targeting, and the membrane insertion of nascent chains at the exit of the ribosomal tunnel.</text>
</comment>
<comment type="subunit">
    <text evidence="5 10">Component of the large ribosomal subunit (LSU). Mature yeast ribosomes consist of a small (40S) and a large (60S) subunit. The 40S small subunit contains 1 molecule of ribosomal RNA (18S rRNA) and 33 different proteins (encoded by 57 genes). The large 60S subunit contains 3 rRNA molecules (25S, 5.8S and 5S rRNA) and 46 different proteins (encoded by 81 genes) (PubMed:22096102, PubMed:9559554).</text>
</comment>
<comment type="subcellular location">
    <subcellularLocation>
        <location evidence="2 5">Cytoplasm</location>
    </subcellularLocation>
</comment>
<comment type="mass spectrometry" mass="27277.348" method="Electrospray" evidence="1">
    <text>Average mass.</text>
</comment>
<comment type="miscellaneous">
    <text evidence="8">There are 2 genes for uL2 in yeast.</text>
</comment>
<comment type="similarity">
    <text evidence="8">Belongs to the universal ribosomal protein uL2 family.</text>
</comment>